<gene>
    <name type="primary">msrA</name>
    <name type="synonym">yppP</name>
    <name type="ordered locus">BSU21690</name>
</gene>
<organism>
    <name type="scientific">Bacillus subtilis (strain 168)</name>
    <dbReference type="NCBI Taxonomy" id="224308"/>
    <lineage>
        <taxon>Bacteria</taxon>
        <taxon>Bacillati</taxon>
        <taxon>Bacillota</taxon>
        <taxon>Bacilli</taxon>
        <taxon>Bacillales</taxon>
        <taxon>Bacillaceae</taxon>
        <taxon>Bacillus</taxon>
    </lineage>
</organism>
<proteinExistence type="evidence at protein level"/>
<reference key="1">
    <citation type="journal article" date="1996" name="Microbiology">
        <title>Organization of the Bacillus subtilis 168 chromosome between kdg and the attachment site of the SP beta prophage: use of long accurate PCR and yeast artificial chromosomes for sequencing.</title>
        <authorList>
            <person name="Capuano V."/>
            <person name="Galleron N."/>
            <person name="Pujic P."/>
            <person name="Sorokin A."/>
            <person name="Ehrlich S.D."/>
        </authorList>
    </citation>
    <scope>NUCLEOTIDE SEQUENCE [GENOMIC DNA]</scope>
    <source>
        <strain>168 / Marburg / ATCC 6051 / DSM 10 / JCM 1465 / NBRC 13719 / NCIMB 3610 / NRRL NRS-744 / VKM B-501</strain>
    </source>
</reference>
<reference key="2">
    <citation type="journal article" date="1997" name="Nature">
        <title>The complete genome sequence of the Gram-positive bacterium Bacillus subtilis.</title>
        <authorList>
            <person name="Kunst F."/>
            <person name="Ogasawara N."/>
            <person name="Moszer I."/>
            <person name="Albertini A.M."/>
            <person name="Alloni G."/>
            <person name="Azevedo V."/>
            <person name="Bertero M.G."/>
            <person name="Bessieres P."/>
            <person name="Bolotin A."/>
            <person name="Borchert S."/>
            <person name="Borriss R."/>
            <person name="Boursier L."/>
            <person name="Brans A."/>
            <person name="Braun M."/>
            <person name="Brignell S.C."/>
            <person name="Bron S."/>
            <person name="Brouillet S."/>
            <person name="Bruschi C.V."/>
            <person name="Caldwell B."/>
            <person name="Capuano V."/>
            <person name="Carter N.M."/>
            <person name="Choi S.-K."/>
            <person name="Codani J.-J."/>
            <person name="Connerton I.F."/>
            <person name="Cummings N.J."/>
            <person name="Daniel R.A."/>
            <person name="Denizot F."/>
            <person name="Devine K.M."/>
            <person name="Duesterhoeft A."/>
            <person name="Ehrlich S.D."/>
            <person name="Emmerson P.T."/>
            <person name="Entian K.-D."/>
            <person name="Errington J."/>
            <person name="Fabret C."/>
            <person name="Ferrari E."/>
            <person name="Foulger D."/>
            <person name="Fritz C."/>
            <person name="Fujita M."/>
            <person name="Fujita Y."/>
            <person name="Fuma S."/>
            <person name="Galizzi A."/>
            <person name="Galleron N."/>
            <person name="Ghim S.-Y."/>
            <person name="Glaser P."/>
            <person name="Goffeau A."/>
            <person name="Golightly E.J."/>
            <person name="Grandi G."/>
            <person name="Guiseppi G."/>
            <person name="Guy B.J."/>
            <person name="Haga K."/>
            <person name="Haiech J."/>
            <person name="Harwood C.R."/>
            <person name="Henaut A."/>
            <person name="Hilbert H."/>
            <person name="Holsappel S."/>
            <person name="Hosono S."/>
            <person name="Hullo M.-F."/>
            <person name="Itaya M."/>
            <person name="Jones L.-M."/>
            <person name="Joris B."/>
            <person name="Karamata D."/>
            <person name="Kasahara Y."/>
            <person name="Klaerr-Blanchard M."/>
            <person name="Klein C."/>
            <person name="Kobayashi Y."/>
            <person name="Koetter P."/>
            <person name="Koningstein G."/>
            <person name="Krogh S."/>
            <person name="Kumano M."/>
            <person name="Kurita K."/>
            <person name="Lapidus A."/>
            <person name="Lardinois S."/>
            <person name="Lauber J."/>
            <person name="Lazarevic V."/>
            <person name="Lee S.-M."/>
            <person name="Levine A."/>
            <person name="Liu H."/>
            <person name="Masuda S."/>
            <person name="Mauel C."/>
            <person name="Medigue C."/>
            <person name="Medina N."/>
            <person name="Mellado R.P."/>
            <person name="Mizuno M."/>
            <person name="Moestl D."/>
            <person name="Nakai S."/>
            <person name="Noback M."/>
            <person name="Noone D."/>
            <person name="O'Reilly M."/>
            <person name="Ogawa K."/>
            <person name="Ogiwara A."/>
            <person name="Oudega B."/>
            <person name="Park S.-H."/>
            <person name="Parro V."/>
            <person name="Pohl T.M."/>
            <person name="Portetelle D."/>
            <person name="Porwollik S."/>
            <person name="Prescott A.M."/>
            <person name="Presecan E."/>
            <person name="Pujic P."/>
            <person name="Purnelle B."/>
            <person name="Rapoport G."/>
            <person name="Rey M."/>
            <person name="Reynolds S."/>
            <person name="Rieger M."/>
            <person name="Rivolta C."/>
            <person name="Rocha E."/>
            <person name="Roche B."/>
            <person name="Rose M."/>
            <person name="Sadaie Y."/>
            <person name="Sato T."/>
            <person name="Scanlan E."/>
            <person name="Schleich S."/>
            <person name="Schroeter R."/>
            <person name="Scoffone F."/>
            <person name="Sekiguchi J."/>
            <person name="Sekowska A."/>
            <person name="Seror S.J."/>
            <person name="Serror P."/>
            <person name="Shin B.-S."/>
            <person name="Soldo B."/>
            <person name="Sorokin A."/>
            <person name="Tacconi E."/>
            <person name="Takagi T."/>
            <person name="Takahashi H."/>
            <person name="Takemaru K."/>
            <person name="Takeuchi M."/>
            <person name="Tamakoshi A."/>
            <person name="Tanaka T."/>
            <person name="Terpstra P."/>
            <person name="Tognoni A."/>
            <person name="Tosato V."/>
            <person name="Uchiyama S."/>
            <person name="Vandenbol M."/>
            <person name="Vannier F."/>
            <person name="Vassarotti A."/>
            <person name="Viari A."/>
            <person name="Wambutt R."/>
            <person name="Wedler E."/>
            <person name="Wedler H."/>
            <person name="Weitzenegger T."/>
            <person name="Winters P."/>
            <person name="Wipat A."/>
            <person name="Yamamoto H."/>
            <person name="Yamane K."/>
            <person name="Yasumoto K."/>
            <person name="Yata K."/>
            <person name="Yoshida K."/>
            <person name="Yoshikawa H.-F."/>
            <person name="Zumstein E."/>
            <person name="Yoshikawa H."/>
            <person name="Danchin A."/>
        </authorList>
    </citation>
    <scope>NUCLEOTIDE SEQUENCE [LARGE SCALE GENOMIC DNA]</scope>
    <source>
        <strain>168</strain>
    </source>
</reference>
<reference key="3">
    <citation type="journal article" date="1998" name="J. Bacteriol.">
        <title>In vitro and in vivo oxidation of methionine residues in small, acid-soluble spore proteins from Bacillus species.</title>
        <authorList>
            <person name="Hayes C.S."/>
            <person name="Illades-Aguiar B."/>
            <person name="Casillas-Martinez L."/>
            <person name="Setlow P."/>
        </authorList>
    </citation>
    <scope>CHARACTERIZATION</scope>
</reference>
<sequence length="177" mass="20182">MSEKKEIATFAGGCFWCMVKPFDEQPGIEKVVSGYTGGHTENPTYEEVCSETTGHREAVQITFHPDVFPYEKLLELFWQQIDPTDAGGQFADRGSSYRAAIFYHNDKQKELAEASKQRLAESGIFKDPIVTDILKAEPFYEAEGYHQHFYKKNPAHYQRYRTGSGRAGFISEHWGAK</sequence>
<name>MSRA_BACSU</name>
<comment type="function">
    <text>Has an important function as a repair enzyme for proteins that have been inactivated by oxidation. Catalyzes the reversible oxidation-reduction of methionine sulfoxide in proteins to methionine. May deal with oxidative damage to alpha/beta-type SASP in spores.</text>
</comment>
<comment type="catalytic activity">
    <reaction>
        <text>L-methionyl-[protein] + [thioredoxin]-disulfide + H2O = L-methionyl-(S)-S-oxide-[protein] + [thioredoxin]-dithiol</text>
        <dbReference type="Rhea" id="RHEA:14217"/>
        <dbReference type="Rhea" id="RHEA-COMP:10698"/>
        <dbReference type="Rhea" id="RHEA-COMP:10700"/>
        <dbReference type="Rhea" id="RHEA-COMP:12313"/>
        <dbReference type="Rhea" id="RHEA-COMP:12315"/>
        <dbReference type="ChEBI" id="CHEBI:15377"/>
        <dbReference type="ChEBI" id="CHEBI:16044"/>
        <dbReference type="ChEBI" id="CHEBI:29950"/>
        <dbReference type="ChEBI" id="CHEBI:44120"/>
        <dbReference type="ChEBI" id="CHEBI:50058"/>
        <dbReference type="EC" id="1.8.4.11"/>
    </reaction>
</comment>
<comment type="catalytic activity">
    <reaction>
        <text>[thioredoxin]-disulfide + L-methionine + H2O = L-methionine (S)-S-oxide + [thioredoxin]-dithiol</text>
        <dbReference type="Rhea" id="RHEA:19993"/>
        <dbReference type="Rhea" id="RHEA-COMP:10698"/>
        <dbReference type="Rhea" id="RHEA-COMP:10700"/>
        <dbReference type="ChEBI" id="CHEBI:15377"/>
        <dbReference type="ChEBI" id="CHEBI:29950"/>
        <dbReference type="ChEBI" id="CHEBI:50058"/>
        <dbReference type="ChEBI" id="CHEBI:57844"/>
        <dbReference type="ChEBI" id="CHEBI:58772"/>
        <dbReference type="EC" id="1.8.4.11"/>
    </reaction>
</comment>
<comment type="similarity">
    <text evidence="2">Belongs to the MsrA Met sulfoxide reductase family.</text>
</comment>
<dbReference type="EC" id="1.8.4.11"/>
<dbReference type="EMBL" id="L77246">
    <property type="protein sequence ID" value="AAA96647.1"/>
    <property type="molecule type" value="Genomic_DNA"/>
</dbReference>
<dbReference type="EMBL" id="AL009126">
    <property type="protein sequence ID" value="CAB14087.1"/>
    <property type="molecule type" value="Genomic_DNA"/>
</dbReference>
<dbReference type="PIR" id="E69940">
    <property type="entry name" value="E69940"/>
</dbReference>
<dbReference type="RefSeq" id="NP_390052.1">
    <property type="nucleotide sequence ID" value="NC_000964.3"/>
</dbReference>
<dbReference type="RefSeq" id="WP_003230812.1">
    <property type="nucleotide sequence ID" value="NZ_OZ025638.1"/>
</dbReference>
<dbReference type="SMR" id="P54154"/>
<dbReference type="FunCoup" id="P54154">
    <property type="interactions" value="563"/>
</dbReference>
<dbReference type="STRING" id="224308.BSU21690"/>
<dbReference type="PaxDb" id="224308-BSU21690"/>
<dbReference type="EnsemblBacteria" id="CAB14087">
    <property type="protein sequence ID" value="CAB14087"/>
    <property type="gene ID" value="BSU_21690"/>
</dbReference>
<dbReference type="GeneID" id="939099"/>
<dbReference type="KEGG" id="bsu:BSU21690"/>
<dbReference type="PATRIC" id="fig|224308.179.peg.2370"/>
<dbReference type="eggNOG" id="COG0225">
    <property type="taxonomic scope" value="Bacteria"/>
</dbReference>
<dbReference type="InParanoid" id="P54154"/>
<dbReference type="OrthoDB" id="4174719at2"/>
<dbReference type="PhylomeDB" id="P54154"/>
<dbReference type="BioCyc" id="BSUB:BSU21690-MONOMER"/>
<dbReference type="Proteomes" id="UP000001570">
    <property type="component" value="Chromosome"/>
</dbReference>
<dbReference type="GO" id="GO:0005737">
    <property type="term" value="C:cytoplasm"/>
    <property type="evidence" value="ECO:0000318"/>
    <property type="project" value="GO_Central"/>
</dbReference>
<dbReference type="GO" id="GO:0036456">
    <property type="term" value="F:L-methionine-(S)-S-oxide reductase activity"/>
    <property type="evidence" value="ECO:0000318"/>
    <property type="project" value="GO_Central"/>
</dbReference>
<dbReference type="GO" id="GO:0008113">
    <property type="term" value="F:peptide-methionine (S)-S-oxide reductase activity"/>
    <property type="evidence" value="ECO:0000318"/>
    <property type="project" value="GO_Central"/>
</dbReference>
<dbReference type="GO" id="GO:0034599">
    <property type="term" value="P:cellular response to oxidative stress"/>
    <property type="evidence" value="ECO:0000318"/>
    <property type="project" value="GO_Central"/>
</dbReference>
<dbReference type="GO" id="GO:0036211">
    <property type="term" value="P:protein modification process"/>
    <property type="evidence" value="ECO:0007669"/>
    <property type="project" value="UniProtKB-UniRule"/>
</dbReference>
<dbReference type="FunFam" id="3.30.1060.10:FF:000003">
    <property type="entry name" value="Peptide methionine sulfoxide reductase MsrA"/>
    <property type="match status" value="1"/>
</dbReference>
<dbReference type="Gene3D" id="3.30.1060.10">
    <property type="entry name" value="Peptide methionine sulphoxide reductase MsrA"/>
    <property type="match status" value="1"/>
</dbReference>
<dbReference type="HAMAP" id="MF_01401">
    <property type="entry name" value="MsrA"/>
    <property type="match status" value="1"/>
</dbReference>
<dbReference type="InterPro" id="IPR002569">
    <property type="entry name" value="Met_Sox_Rdtase_MsrA_dom"/>
</dbReference>
<dbReference type="InterPro" id="IPR036509">
    <property type="entry name" value="Met_Sox_Rdtase_MsrA_sf"/>
</dbReference>
<dbReference type="NCBIfam" id="TIGR00401">
    <property type="entry name" value="msrA"/>
    <property type="match status" value="1"/>
</dbReference>
<dbReference type="PANTHER" id="PTHR43774">
    <property type="entry name" value="PEPTIDE METHIONINE SULFOXIDE REDUCTASE"/>
    <property type="match status" value="1"/>
</dbReference>
<dbReference type="PANTHER" id="PTHR43774:SF1">
    <property type="entry name" value="PEPTIDE METHIONINE SULFOXIDE REDUCTASE MSRA 2"/>
    <property type="match status" value="1"/>
</dbReference>
<dbReference type="Pfam" id="PF01625">
    <property type="entry name" value="PMSR"/>
    <property type="match status" value="1"/>
</dbReference>
<dbReference type="SUPFAM" id="SSF55068">
    <property type="entry name" value="Peptide methionine sulfoxide reductase"/>
    <property type="match status" value="1"/>
</dbReference>
<accession>P54154</accession>
<feature type="chain" id="PRO_0000138530" description="Peptide methionine sulfoxide reductase MsrA">
    <location>
        <begin position="1"/>
        <end position="177"/>
    </location>
</feature>
<feature type="active site" evidence="1">
    <location>
        <position position="14"/>
    </location>
</feature>
<evidence type="ECO:0000250" key="1"/>
<evidence type="ECO:0000305" key="2"/>
<keyword id="KW-0560">Oxidoreductase</keyword>
<keyword id="KW-1185">Reference proteome</keyword>
<protein>
    <recommendedName>
        <fullName>Peptide methionine sulfoxide reductase MsrA</fullName>
        <shortName>Protein-methionine-S-oxide reductase</shortName>
        <ecNumber>1.8.4.11</ecNumber>
    </recommendedName>
    <alternativeName>
        <fullName>Peptide-methionine (S)-S-oxide reductase</fullName>
        <shortName>Peptide Met(O) reductase</shortName>
    </alternativeName>
</protein>